<reference key="1">
    <citation type="journal article" date="2001" name="Genome Res.">
        <title>The complete genome sequence of the lactic acid bacterium Lactococcus lactis ssp. lactis IL1403.</title>
        <authorList>
            <person name="Bolotin A."/>
            <person name="Wincker P."/>
            <person name="Mauger S."/>
            <person name="Jaillon O."/>
            <person name="Malarme K."/>
            <person name="Weissenbach J."/>
            <person name="Ehrlich S.D."/>
            <person name="Sorokin A."/>
        </authorList>
    </citation>
    <scope>NUCLEOTIDE SEQUENCE [LARGE SCALE GENOMIC DNA]</scope>
    <source>
        <strain>IL1403</strain>
    </source>
</reference>
<reference key="2">
    <citation type="journal article" date="2002" name="Appl. Environ. Microbiol.">
        <title>The peptidyl-prolyl isomerase motif is lacking in PmpA, the PrsA-like protein involved in the secretion machinery of Lactococcus lactis.</title>
        <authorList>
            <person name="Drouault S."/>
            <person name="Anba J."/>
            <person name="Bonneau S."/>
            <person name="Bolotin A."/>
            <person name="Ehrlich S.D."/>
            <person name="Renault P."/>
        </authorList>
    </citation>
    <scope>CHARACTERIZATION</scope>
    <source>
        <strain>IL1403</strain>
    </source>
</reference>
<proteinExistence type="evidence at protein level"/>
<feature type="signal peptide" evidence="1">
    <location>
        <begin position="1"/>
        <end position="24"/>
    </location>
</feature>
<feature type="chain" id="PRO_0000029304" description="Foldase protein PrsA">
    <location>
        <begin position="25"/>
        <end position="308"/>
    </location>
</feature>
<feature type="lipid moiety-binding region" description="N-palmitoyl cysteine" evidence="1">
    <location>
        <position position="25"/>
    </location>
</feature>
<feature type="lipid moiety-binding region" description="S-diacylglycerol cysteine" evidence="1">
    <location>
        <position position="25"/>
    </location>
</feature>
<feature type="strand" evidence="3">
    <location>
        <begin position="34"/>
        <end position="38"/>
    </location>
</feature>
<feature type="strand" evidence="3">
    <location>
        <begin position="41"/>
        <end position="44"/>
    </location>
</feature>
<feature type="helix" evidence="3">
    <location>
        <begin position="45"/>
        <end position="54"/>
    </location>
</feature>
<feature type="helix" evidence="3">
    <location>
        <begin position="60"/>
        <end position="77"/>
    </location>
</feature>
<feature type="helix" evidence="3">
    <location>
        <begin position="78"/>
        <end position="80"/>
    </location>
</feature>
<feature type="helix" evidence="3">
    <location>
        <begin position="83"/>
        <end position="97"/>
    </location>
</feature>
<feature type="helix" evidence="3">
    <location>
        <begin position="98"/>
        <end position="100"/>
    </location>
</feature>
<feature type="helix" evidence="3">
    <location>
        <begin position="101"/>
        <end position="108"/>
    </location>
</feature>
<feature type="helix" evidence="3">
    <location>
        <begin position="112"/>
        <end position="136"/>
    </location>
</feature>
<feature type="helix" evidence="3">
    <location>
        <begin position="140"/>
        <end position="148"/>
    </location>
</feature>
<feature type="strand" evidence="3">
    <location>
        <begin position="154"/>
        <end position="159"/>
    </location>
</feature>
<feature type="helix" evidence="3">
    <location>
        <begin position="164"/>
        <end position="175"/>
    </location>
</feature>
<feature type="helix" evidence="3">
    <location>
        <begin position="178"/>
        <end position="187"/>
    </location>
</feature>
<feature type="helix" evidence="3">
    <location>
        <begin position="189"/>
        <end position="191"/>
    </location>
</feature>
<feature type="strand" evidence="3">
    <location>
        <begin position="192"/>
        <end position="195"/>
    </location>
</feature>
<feature type="strand" evidence="3">
    <location>
        <begin position="200"/>
        <end position="202"/>
    </location>
</feature>
<feature type="helix" evidence="3">
    <location>
        <begin position="204"/>
        <end position="210"/>
    </location>
</feature>
<feature type="strand" evidence="3">
    <location>
        <begin position="222"/>
        <end position="225"/>
    </location>
</feature>
<feature type="strand" evidence="3">
    <location>
        <begin position="227"/>
        <end position="229"/>
    </location>
</feature>
<feature type="strand" evidence="3">
    <location>
        <begin position="232"/>
        <end position="241"/>
    </location>
</feature>
<feature type="helix" evidence="3">
    <location>
        <begin position="249"/>
        <end position="252"/>
    </location>
</feature>
<feature type="helix" evidence="3">
    <location>
        <begin position="253"/>
        <end position="265"/>
    </location>
</feature>
<feature type="helix" evidence="3">
    <location>
        <begin position="268"/>
        <end position="281"/>
    </location>
</feature>
<feature type="helix" evidence="3">
    <location>
        <begin position="289"/>
        <end position="294"/>
    </location>
</feature>
<feature type="turn" evidence="3">
    <location>
        <begin position="296"/>
        <end position="300"/>
    </location>
</feature>
<organism>
    <name type="scientific">Lactococcus lactis subsp. lactis (strain IL1403)</name>
    <name type="common">Streptococcus lactis</name>
    <dbReference type="NCBI Taxonomy" id="272623"/>
    <lineage>
        <taxon>Bacteria</taxon>
        <taxon>Bacillati</taxon>
        <taxon>Bacillota</taxon>
        <taxon>Bacilli</taxon>
        <taxon>Lactobacillales</taxon>
        <taxon>Streptococcaceae</taxon>
        <taxon>Lactococcus</taxon>
    </lineage>
</organism>
<protein>
    <recommendedName>
        <fullName>Foldase protein PrsA</fullName>
        <ecNumber>5.2.1.8</ecNumber>
    </recommendedName>
</protein>
<sequence>MKFKKLGLVMTTVFAGAALVTLSGCSSSDSASKDIITMKGDTIRVSDLYKEAKQFPSQPTNTLLQNLTFDKIFTKDFGKEVTDKDVSKKVKSIKDQYGSQFSSALQQQGLTEASFTPYMRTQMLEQAAIDHEIKETQYTDANLKKAWESYHPDVTAYVVSETSKDAATKALDAAKKDDAGKASFEKTNAESKVTFNSTSTSVPTEVQTAAFKLKNGEFSDVIESTSSSTGATSYYIVEMVKTSEKGTDMNKYKKELQNVIKTEKEQDTTFVSGVIAKYLKKNNVTVKESAFASLFSQFTQTSSSSSSK</sequence>
<gene>
    <name type="primary">prsA</name>
    <name type="synonym">pmpA</name>
    <name type="ordered locus">LL1725</name>
    <name type="ORF">L164604</name>
</gene>
<comment type="function">
    <text>Plays a major role in protein secretion by helping the post-translocational extracellular folding of several secreted proteins.</text>
</comment>
<comment type="catalytic activity">
    <reaction>
        <text>[protein]-peptidylproline (omega=180) = [protein]-peptidylproline (omega=0)</text>
        <dbReference type="Rhea" id="RHEA:16237"/>
        <dbReference type="Rhea" id="RHEA-COMP:10747"/>
        <dbReference type="Rhea" id="RHEA-COMP:10748"/>
        <dbReference type="ChEBI" id="CHEBI:83833"/>
        <dbReference type="ChEBI" id="CHEBI:83834"/>
        <dbReference type="EC" id="5.2.1.8"/>
    </reaction>
</comment>
<comment type="subcellular location">
    <subcellularLocation>
        <location evidence="2">Cell membrane</location>
        <topology evidence="2">Lipid-anchor</topology>
    </subcellularLocation>
</comment>
<comment type="miscellaneous">
    <text>The conserved PPIase motif is absent in this protein but it still has foldase activity.</text>
</comment>
<comment type="similarity">
    <text evidence="2">Belongs to the PrsA family.</text>
</comment>
<keyword id="KW-0002">3D-structure</keyword>
<keyword id="KW-1003">Cell membrane</keyword>
<keyword id="KW-0413">Isomerase</keyword>
<keyword id="KW-0449">Lipoprotein</keyword>
<keyword id="KW-0472">Membrane</keyword>
<keyword id="KW-0564">Palmitate</keyword>
<keyword id="KW-1185">Reference proteome</keyword>
<keyword id="KW-0697">Rotamase</keyword>
<keyword id="KW-0732">Signal</keyword>
<evidence type="ECO:0000255" key="1"/>
<evidence type="ECO:0000305" key="2"/>
<evidence type="ECO:0007829" key="3">
    <source>
        <dbReference type="PDB" id="6VJ2"/>
    </source>
</evidence>
<dbReference type="EC" id="5.2.1.8"/>
<dbReference type="EMBL" id="AE005176">
    <property type="protein sequence ID" value="AAK05823.1"/>
    <property type="molecule type" value="Genomic_DNA"/>
</dbReference>
<dbReference type="PIR" id="E86840">
    <property type="entry name" value="E86840"/>
</dbReference>
<dbReference type="RefSeq" id="NP_267881.1">
    <property type="nucleotide sequence ID" value="NC_002662.1"/>
</dbReference>
<dbReference type="RefSeq" id="WP_010906107.1">
    <property type="nucleotide sequence ID" value="NC_002662.1"/>
</dbReference>
<dbReference type="PDB" id="6VJ2">
    <property type="method" value="X-ray"/>
    <property type="resolution" value="3.10 A"/>
    <property type="chains" value="A/B/C/D=28-308"/>
</dbReference>
<dbReference type="PDBsum" id="6VJ2"/>
<dbReference type="SMR" id="Q9CEV9"/>
<dbReference type="PaxDb" id="272623-L164604"/>
<dbReference type="EnsemblBacteria" id="AAK05823">
    <property type="protein sequence ID" value="AAK05823"/>
    <property type="gene ID" value="L164604"/>
</dbReference>
<dbReference type="KEGG" id="lla:L164604"/>
<dbReference type="PATRIC" id="fig|272623.7.peg.1850"/>
<dbReference type="eggNOG" id="COG0760">
    <property type="taxonomic scope" value="Bacteria"/>
</dbReference>
<dbReference type="HOGENOM" id="CLU_034646_6_0_9"/>
<dbReference type="OrthoDB" id="2194386at2"/>
<dbReference type="Proteomes" id="UP000002196">
    <property type="component" value="Chromosome"/>
</dbReference>
<dbReference type="GO" id="GO:0005886">
    <property type="term" value="C:plasma membrane"/>
    <property type="evidence" value="ECO:0007669"/>
    <property type="project" value="UniProtKB-SubCell"/>
</dbReference>
<dbReference type="GO" id="GO:0003755">
    <property type="term" value="F:peptidyl-prolyl cis-trans isomerase activity"/>
    <property type="evidence" value="ECO:0007669"/>
    <property type="project" value="UniProtKB-UniRule"/>
</dbReference>
<dbReference type="GO" id="GO:0006457">
    <property type="term" value="P:protein folding"/>
    <property type="evidence" value="ECO:0007669"/>
    <property type="project" value="UniProtKB-UniRule"/>
</dbReference>
<dbReference type="Gene3D" id="1.10.4030.10">
    <property type="entry name" value="Porin chaperone SurA, peptide-binding domain"/>
    <property type="match status" value="1"/>
</dbReference>
<dbReference type="HAMAP" id="MF_01145">
    <property type="entry name" value="Foldase_PrsA"/>
    <property type="match status" value="1"/>
</dbReference>
<dbReference type="InterPro" id="IPR023059">
    <property type="entry name" value="Foldase_PrsA"/>
</dbReference>
<dbReference type="InterPro" id="IPR050245">
    <property type="entry name" value="PrsA_foldase"/>
</dbReference>
<dbReference type="InterPro" id="IPR027304">
    <property type="entry name" value="Trigger_fact/SurA_dom_sf"/>
</dbReference>
<dbReference type="PANTHER" id="PTHR47245:SF1">
    <property type="entry name" value="FOLDASE PROTEIN PRSA"/>
    <property type="match status" value="1"/>
</dbReference>
<dbReference type="PANTHER" id="PTHR47245">
    <property type="entry name" value="PEPTIDYLPROLYL ISOMERASE"/>
    <property type="match status" value="1"/>
</dbReference>
<dbReference type="SUPFAM" id="SSF109998">
    <property type="entry name" value="Triger factor/SurA peptide-binding domain-like"/>
    <property type="match status" value="1"/>
</dbReference>
<dbReference type="PROSITE" id="PS51257">
    <property type="entry name" value="PROKAR_LIPOPROTEIN"/>
    <property type="match status" value="1"/>
</dbReference>
<accession>Q9CEV9</accession>
<name>PRSA_LACLA</name>